<comment type="catalytic activity">
    <reaction evidence="5">
        <text>tRNA(Phe) + L-phenylalanine + ATP = L-phenylalanyl-tRNA(Phe) + AMP + diphosphate + H(+)</text>
        <dbReference type="Rhea" id="RHEA:19413"/>
        <dbReference type="Rhea" id="RHEA-COMP:9668"/>
        <dbReference type="Rhea" id="RHEA-COMP:9699"/>
        <dbReference type="ChEBI" id="CHEBI:15378"/>
        <dbReference type="ChEBI" id="CHEBI:30616"/>
        <dbReference type="ChEBI" id="CHEBI:33019"/>
        <dbReference type="ChEBI" id="CHEBI:58095"/>
        <dbReference type="ChEBI" id="CHEBI:78442"/>
        <dbReference type="ChEBI" id="CHEBI:78531"/>
        <dbReference type="ChEBI" id="CHEBI:456215"/>
        <dbReference type="EC" id="6.1.1.20"/>
    </reaction>
    <physiologicalReaction direction="left-to-right" evidence="10">
        <dbReference type="Rhea" id="RHEA:19414"/>
    </physiologicalReaction>
</comment>
<comment type="subunit">
    <text evidence="5">Heterotetramer; dimer of two heterodimers formed by FARSA and FARSB.</text>
</comment>
<comment type="interaction">
    <interactant intactId="EBI-725361">
        <id>Q9Y285</id>
    </interactant>
    <interactant intactId="EBI-742038">
        <id>Q9P2A4</id>
        <label>ABI3</label>
    </interactant>
    <organismsDiffer>false</organismsDiffer>
    <experiments>3</experiments>
</comment>
<comment type="interaction">
    <interactant intactId="EBI-725361">
        <id>Q9Y285</id>
    </interactant>
    <interactant intactId="EBI-368382">
        <id>Q9H9E3</id>
        <label>COG4</label>
    </interactant>
    <organismsDiffer>false</organismsDiffer>
    <experiments>3</experiments>
</comment>
<comment type="interaction">
    <interactant intactId="EBI-725361">
        <id>Q9Y285</id>
    </interactant>
    <interactant intactId="EBI-712452">
        <id>Q9BQ95</id>
        <label>ECSIT</label>
    </interactant>
    <organismsDiffer>false</organismsDiffer>
    <experiments>2</experiments>
</comment>
<comment type="interaction">
    <interactant intactId="EBI-725361">
        <id>Q9Y285</id>
    </interactant>
    <interactant intactId="EBI-353803">
        <id>Q9NSD9</id>
        <label>FARSB</label>
    </interactant>
    <organismsDiffer>false</organismsDiffer>
    <experiments>9</experiments>
</comment>
<comment type="interaction">
    <interactant intactId="EBI-725361">
        <id>Q9Y285</id>
    </interactant>
    <interactant intactId="EBI-740195">
        <id>Q9BUL8</id>
        <label>PDCD10</label>
    </interactant>
    <organismsDiffer>false</organismsDiffer>
    <experiments>3</experiments>
</comment>
<comment type="subcellular location">
    <subcellularLocation>
        <location evidence="2">Cytoplasm</location>
    </subcellularLocation>
</comment>
<comment type="alternative products">
    <event type="alternative splicing"/>
    <isoform>
        <id>Q9Y285-1</id>
        <name>1</name>
        <sequence type="displayed"/>
    </isoform>
    <isoform>
        <id>Q9Y285-2</id>
        <name>2</name>
        <sequence type="described" ref="VSP_056196"/>
    </isoform>
</comment>
<comment type="disease" evidence="6">
    <disease id="DI-05916">
        <name>Rajab interstitial lung disease with brain calcifications 2</name>
        <acronym>RILDBC2</acronym>
        <description>An autosomal recessive disorder characterized by interstitial lung disease, growth delay, hypotonia, liver disease, and brain abnormalities including diffuse, symmetrical brain calcifications and periventricular cysts.</description>
        <dbReference type="MIM" id="619013"/>
    </disease>
    <text>The disease may be caused by variants affecting the gene represented in this entry.</text>
</comment>
<comment type="similarity">
    <text evidence="9">Belongs to the class-II aminoacyl-tRNA synthetase family. Phe-tRNA synthetase alpha subunit type 2 subfamily.</text>
</comment>
<comment type="sequence caution" evidence="9">
    <conflict type="erroneous gene model prediction">
        <sequence resource="EMBL-CDS" id="AAB51175"/>
    </conflict>
</comment>
<feature type="initiator methionine" description="Removed" evidence="4 7 13 15 16 18">
    <location>
        <position position="1"/>
    </location>
</feature>
<feature type="chain" id="PRO_0000126824" description="Phenylalanine--tRNA ligase alpha subunit">
    <location>
        <begin position="2"/>
        <end position="508"/>
    </location>
</feature>
<feature type="binding site" evidence="5 11">
    <location>
        <position position="329"/>
    </location>
    <ligand>
        <name>L-phenylalanine</name>
        <dbReference type="ChEBI" id="CHEBI:58095"/>
    </ligand>
</feature>
<feature type="binding site" evidence="5 11">
    <location>
        <begin position="372"/>
        <end position="374"/>
    </location>
    <ligand>
        <name>L-phenylalanine</name>
        <dbReference type="ChEBI" id="CHEBI:58095"/>
    </ligand>
</feature>
<feature type="binding site" evidence="5 11">
    <location>
        <position position="412"/>
    </location>
    <ligand>
        <name>L-phenylalanine</name>
        <dbReference type="ChEBI" id="CHEBI:58095"/>
    </ligand>
</feature>
<feature type="binding site" evidence="1">
    <location>
        <position position="414"/>
    </location>
    <ligand>
        <name>Mg(2+)</name>
        <dbReference type="ChEBI" id="CHEBI:18420"/>
        <note>shared with beta subunit</note>
    </ligand>
</feature>
<feature type="binding site" evidence="5 11">
    <location>
        <position position="438"/>
    </location>
    <ligand>
        <name>L-phenylalanine</name>
        <dbReference type="ChEBI" id="CHEBI:58095"/>
    </ligand>
</feature>
<feature type="modified residue" description="N-acetylalanine" evidence="7 13 15 16 18">
    <location>
        <position position="2"/>
    </location>
</feature>
<feature type="modified residue" description="Phosphothreonine" evidence="17">
    <location>
        <position position="190"/>
    </location>
</feature>
<feature type="modified residue" description="Phosphoserine" evidence="12">
    <location>
        <position position="193"/>
    </location>
</feature>
<feature type="modified residue" description="Phosphoserine" evidence="3">
    <location>
        <position position="301"/>
    </location>
</feature>
<feature type="modified residue" description="N6-acetyllysine" evidence="14">
    <location>
        <position position="311"/>
    </location>
</feature>
<feature type="splice variant" id="VSP_056196" description="In isoform 2." evidence="8">
    <location>
        <begin position="169"/>
        <end position="199"/>
    </location>
</feature>
<feature type="sequence variant" id="VAR_084994" description="In RILDBC2; uncertain significance; dbSNP:rs941586004." evidence="6">
    <original>F</original>
    <variation>L</variation>
    <location>
        <position position="256"/>
    </location>
</feature>
<feature type="sequence variant" id="VAR_052641" description="In dbSNP:rs35087277.">
    <original>Q</original>
    <variation>R</variation>
    <location>
        <position position="341"/>
    </location>
</feature>
<feature type="sequence variant" id="VAR_084995" description="In RILDBC2; uncertain significance; dbSNP:rs1971301248." evidence="6">
    <original>N</original>
    <variation>K</variation>
    <location>
        <position position="410"/>
    </location>
</feature>
<feature type="sequence conflict" description="In Ref. 3; BAA95666." evidence="9" ref="3">
    <original>S</original>
    <variation>G</variation>
    <location>
        <position position="179"/>
    </location>
</feature>
<feature type="sequence conflict" description="In Ref. 3; BAA95666." evidence="9" ref="3">
    <original>V</original>
    <variation>L</variation>
    <location>
        <position position="376"/>
    </location>
</feature>
<feature type="helix" evidence="19">
    <location>
        <begin position="4"/>
        <end position="16"/>
    </location>
</feature>
<feature type="strand" evidence="19">
    <location>
        <begin position="17"/>
        <end position="19"/>
    </location>
</feature>
<feature type="helix" evidence="19">
    <location>
        <begin position="25"/>
        <end position="28"/>
    </location>
</feature>
<feature type="turn" evidence="19">
    <location>
        <begin position="29"/>
        <end position="31"/>
    </location>
</feature>
<feature type="helix" evidence="19">
    <location>
        <begin position="37"/>
        <end position="41"/>
    </location>
</feature>
<feature type="helix" evidence="19">
    <location>
        <begin position="43"/>
        <end position="46"/>
    </location>
</feature>
<feature type="strand" evidence="19">
    <location>
        <begin position="53"/>
        <end position="61"/>
    </location>
</feature>
<feature type="helix" evidence="19">
    <location>
        <begin position="65"/>
        <end position="73"/>
    </location>
</feature>
<feature type="helix" evidence="19">
    <location>
        <begin position="76"/>
        <end position="83"/>
    </location>
</feature>
<feature type="helix" evidence="19">
    <location>
        <begin position="91"/>
        <end position="94"/>
    </location>
</feature>
<feature type="helix" evidence="19">
    <location>
        <begin position="98"/>
        <end position="108"/>
    </location>
</feature>
<feature type="turn" evidence="19">
    <location>
        <begin position="109"/>
        <end position="111"/>
    </location>
</feature>
<feature type="strand" evidence="19">
    <location>
        <begin position="112"/>
        <end position="114"/>
    </location>
</feature>
<feature type="strand" evidence="19">
    <location>
        <begin position="119"/>
        <end position="121"/>
    </location>
</feature>
<feature type="strand" evidence="19">
    <location>
        <begin position="126"/>
        <end position="128"/>
    </location>
</feature>
<feature type="helix" evidence="19">
    <location>
        <begin position="135"/>
        <end position="143"/>
    </location>
</feature>
<feature type="turn" evidence="19">
    <location>
        <begin position="144"/>
        <end position="149"/>
    </location>
</feature>
<feature type="helix" evidence="19">
    <location>
        <begin position="153"/>
        <end position="161"/>
    </location>
</feature>
<feature type="strand" evidence="19">
    <location>
        <begin position="167"/>
        <end position="175"/>
    </location>
</feature>
<feature type="turn" evidence="19">
    <location>
        <begin position="194"/>
        <end position="198"/>
    </location>
</feature>
<feature type="turn" evidence="19">
    <location>
        <begin position="201"/>
        <end position="204"/>
    </location>
</feature>
<feature type="strand" evidence="19">
    <location>
        <begin position="212"/>
        <end position="214"/>
    </location>
</feature>
<feature type="helix" evidence="19">
    <location>
        <begin position="226"/>
        <end position="240"/>
    </location>
</feature>
<feature type="strand" evidence="19">
    <location>
        <begin position="251"/>
        <end position="254"/>
    </location>
</feature>
<feature type="helix" evidence="19">
    <location>
        <begin position="255"/>
        <end position="258"/>
    </location>
</feature>
<feature type="helix" evidence="19">
    <location>
        <begin position="260"/>
        <end position="262"/>
    </location>
</feature>
<feature type="strand" evidence="19">
    <location>
        <begin position="266"/>
        <end position="268"/>
    </location>
</feature>
<feature type="turn" evidence="19">
    <location>
        <begin position="273"/>
        <end position="275"/>
    </location>
</feature>
<feature type="strand" evidence="19">
    <location>
        <begin position="278"/>
        <end position="280"/>
    </location>
</feature>
<feature type="helix" evidence="19">
    <location>
        <begin position="290"/>
        <end position="301"/>
    </location>
</feature>
<feature type="helix" evidence="19">
    <location>
        <begin position="316"/>
        <end position="319"/>
    </location>
</feature>
<feature type="strand" evidence="19">
    <location>
        <begin position="321"/>
        <end position="324"/>
    </location>
</feature>
<feature type="helix" evidence="19">
    <location>
        <begin position="329"/>
        <end position="340"/>
    </location>
</feature>
<feature type="strand" evidence="19">
    <location>
        <begin position="342"/>
        <end position="344"/>
    </location>
</feature>
<feature type="strand" evidence="19">
    <location>
        <begin position="348"/>
        <end position="357"/>
    </location>
</feature>
<feature type="strand" evidence="19">
    <location>
        <begin position="364"/>
        <end position="366"/>
    </location>
</feature>
<feature type="strand" evidence="19">
    <location>
        <begin position="368"/>
        <end position="381"/>
    </location>
</feature>
<feature type="helix" evidence="19">
    <location>
        <begin position="384"/>
        <end position="396"/>
    </location>
</feature>
<feature type="turn" evidence="19">
    <location>
        <begin position="397"/>
        <end position="399"/>
    </location>
</feature>
<feature type="strand" evidence="19">
    <location>
        <begin position="404"/>
        <end position="407"/>
    </location>
</feature>
<feature type="strand" evidence="19">
    <location>
        <begin position="414"/>
        <end position="421"/>
    </location>
</feature>
<feature type="strand" evidence="19">
    <location>
        <begin position="430"/>
        <end position="436"/>
    </location>
</feature>
<feature type="helix" evidence="19">
    <location>
        <begin position="440"/>
        <end position="443"/>
    </location>
</feature>
<feature type="helix" evidence="19">
    <location>
        <begin position="444"/>
        <end position="446"/>
    </location>
</feature>
<feature type="strand" evidence="19">
    <location>
        <begin position="452"/>
        <end position="461"/>
    </location>
</feature>
<feature type="helix" evidence="19">
    <location>
        <begin position="462"/>
        <end position="465"/>
    </location>
</feature>
<feature type="turn" evidence="19">
    <location>
        <begin position="466"/>
        <end position="470"/>
    </location>
</feature>
<feature type="helix" evidence="19">
    <location>
        <begin position="474"/>
        <end position="476"/>
    </location>
</feature>
<feature type="helix" evidence="19">
    <location>
        <begin position="484"/>
        <end position="489"/>
    </location>
</feature>
<feature type="turn" evidence="19">
    <location>
        <begin position="497"/>
        <end position="499"/>
    </location>
</feature>
<reference key="1">
    <citation type="journal article" date="1997" name="Proc. Natl. Acad. Sci. U.S.A.">
        <title>Expression of a gene encoding a tRNA synthetase-like protein is enhanced in tumorigenic human myeloid leukemia cells and is cell cycle stage- and differentiation-dependent.</title>
        <authorList>
            <person name="Sen S."/>
            <person name="Zhou H."/>
            <person name="Ripmaster T."/>
            <person name="Hittelman W.N."/>
            <person name="Schimmel P."/>
            <person name="White R.A."/>
        </authorList>
    </citation>
    <scope>NUCLEOTIDE SEQUENCE [MRNA] (ISOFORM 1)</scope>
</reference>
<reference key="2">
    <citation type="journal article" date="1999" name="Biochem. Biophys. Res. Commun.">
        <title>Human phenylalanyl-tRNA synthetase: cloning, characterization of the deduced amino acid sequences in terms of the structural domains and coordinately regulated expression of the alpha and beta subunits in chronic myeloid leukemia cells.</title>
        <authorList>
            <person name="Rodova M."/>
            <person name="Ankilova V."/>
            <person name="Safro M.G."/>
        </authorList>
    </citation>
    <scope>NUCLEOTIDE SEQUENCE [MRNA] (ISOFORM 1)</scope>
</reference>
<reference key="3">
    <citation type="submission" date="1996-04" db="EMBL/GenBank/DDBJ databases">
        <authorList>
            <person name="Motegi H."/>
            <person name="Noda T."/>
            <person name="Shiba K."/>
        </authorList>
    </citation>
    <scope>NUCLEOTIDE SEQUENCE [MRNA] (ISOFORM 1)</scope>
    <source>
        <tissue>Testis</tissue>
    </source>
</reference>
<reference key="4">
    <citation type="submission" date="2003-05" db="EMBL/GenBank/DDBJ databases">
        <title>Cloning of human full-length CDSs in BD Creator(TM) system donor vector.</title>
        <authorList>
            <person name="Kalnine N."/>
            <person name="Chen X."/>
            <person name="Rolfs A."/>
            <person name="Halleck A."/>
            <person name="Hines L."/>
            <person name="Eisenstein S."/>
            <person name="Koundinya M."/>
            <person name="Raphael J."/>
            <person name="Moreira D."/>
            <person name="Kelley T."/>
            <person name="LaBaer J."/>
            <person name="Lin Y."/>
            <person name="Phelan M."/>
            <person name="Farmer A."/>
        </authorList>
    </citation>
    <scope>NUCLEOTIDE SEQUENCE [LARGE SCALE MRNA] (ISOFORM 1)</scope>
</reference>
<reference key="5">
    <citation type="journal article" date="2004" name="Nat. Genet.">
        <title>Complete sequencing and characterization of 21,243 full-length human cDNAs.</title>
        <authorList>
            <person name="Ota T."/>
            <person name="Suzuki Y."/>
            <person name="Nishikawa T."/>
            <person name="Otsuki T."/>
            <person name="Sugiyama T."/>
            <person name="Irie R."/>
            <person name="Wakamatsu A."/>
            <person name="Hayashi K."/>
            <person name="Sato H."/>
            <person name="Nagai K."/>
            <person name="Kimura K."/>
            <person name="Makita H."/>
            <person name="Sekine M."/>
            <person name="Obayashi M."/>
            <person name="Nishi T."/>
            <person name="Shibahara T."/>
            <person name="Tanaka T."/>
            <person name="Ishii S."/>
            <person name="Yamamoto J."/>
            <person name="Saito K."/>
            <person name="Kawai Y."/>
            <person name="Isono Y."/>
            <person name="Nakamura Y."/>
            <person name="Nagahari K."/>
            <person name="Murakami K."/>
            <person name="Yasuda T."/>
            <person name="Iwayanagi T."/>
            <person name="Wagatsuma M."/>
            <person name="Shiratori A."/>
            <person name="Sudo H."/>
            <person name="Hosoiri T."/>
            <person name="Kaku Y."/>
            <person name="Kodaira H."/>
            <person name="Kondo H."/>
            <person name="Sugawara M."/>
            <person name="Takahashi M."/>
            <person name="Kanda K."/>
            <person name="Yokoi T."/>
            <person name="Furuya T."/>
            <person name="Kikkawa E."/>
            <person name="Omura Y."/>
            <person name="Abe K."/>
            <person name="Kamihara K."/>
            <person name="Katsuta N."/>
            <person name="Sato K."/>
            <person name="Tanikawa M."/>
            <person name="Yamazaki M."/>
            <person name="Ninomiya K."/>
            <person name="Ishibashi T."/>
            <person name="Yamashita H."/>
            <person name="Murakawa K."/>
            <person name="Fujimori K."/>
            <person name="Tanai H."/>
            <person name="Kimata M."/>
            <person name="Watanabe M."/>
            <person name="Hiraoka S."/>
            <person name="Chiba Y."/>
            <person name="Ishida S."/>
            <person name="Ono Y."/>
            <person name="Takiguchi S."/>
            <person name="Watanabe S."/>
            <person name="Yosida M."/>
            <person name="Hotuta T."/>
            <person name="Kusano J."/>
            <person name="Kanehori K."/>
            <person name="Takahashi-Fujii A."/>
            <person name="Hara H."/>
            <person name="Tanase T.-O."/>
            <person name="Nomura Y."/>
            <person name="Togiya S."/>
            <person name="Komai F."/>
            <person name="Hara R."/>
            <person name="Takeuchi K."/>
            <person name="Arita M."/>
            <person name="Imose N."/>
            <person name="Musashino K."/>
            <person name="Yuuki H."/>
            <person name="Oshima A."/>
            <person name="Sasaki N."/>
            <person name="Aotsuka S."/>
            <person name="Yoshikawa Y."/>
            <person name="Matsunawa H."/>
            <person name="Ichihara T."/>
            <person name="Shiohata N."/>
            <person name="Sano S."/>
            <person name="Moriya S."/>
            <person name="Momiyama H."/>
            <person name="Satoh N."/>
            <person name="Takami S."/>
            <person name="Terashima Y."/>
            <person name="Suzuki O."/>
            <person name="Nakagawa S."/>
            <person name="Senoh A."/>
            <person name="Mizoguchi H."/>
            <person name="Goto Y."/>
            <person name="Shimizu F."/>
            <person name="Wakebe H."/>
            <person name="Hishigaki H."/>
            <person name="Watanabe T."/>
            <person name="Sugiyama A."/>
            <person name="Takemoto M."/>
            <person name="Kawakami B."/>
            <person name="Yamazaki M."/>
            <person name="Watanabe K."/>
            <person name="Kumagai A."/>
            <person name="Itakura S."/>
            <person name="Fukuzumi Y."/>
            <person name="Fujimori Y."/>
            <person name="Komiyama M."/>
            <person name="Tashiro H."/>
            <person name="Tanigami A."/>
            <person name="Fujiwara T."/>
            <person name="Ono T."/>
            <person name="Yamada K."/>
            <person name="Fujii Y."/>
            <person name="Ozaki K."/>
            <person name="Hirao M."/>
            <person name="Ohmori Y."/>
            <person name="Kawabata A."/>
            <person name="Hikiji T."/>
            <person name="Kobatake N."/>
            <person name="Inagaki H."/>
            <person name="Ikema Y."/>
            <person name="Okamoto S."/>
            <person name="Okitani R."/>
            <person name="Kawakami T."/>
            <person name="Noguchi S."/>
            <person name="Itoh T."/>
            <person name="Shigeta K."/>
            <person name="Senba T."/>
            <person name="Matsumura K."/>
            <person name="Nakajima Y."/>
            <person name="Mizuno T."/>
            <person name="Morinaga M."/>
            <person name="Sasaki M."/>
            <person name="Togashi T."/>
            <person name="Oyama M."/>
            <person name="Hata H."/>
            <person name="Watanabe M."/>
            <person name="Komatsu T."/>
            <person name="Mizushima-Sugano J."/>
            <person name="Satoh T."/>
            <person name="Shirai Y."/>
            <person name="Takahashi Y."/>
            <person name="Nakagawa K."/>
            <person name="Okumura K."/>
            <person name="Nagase T."/>
            <person name="Nomura N."/>
            <person name="Kikuchi H."/>
            <person name="Masuho Y."/>
            <person name="Yamashita R."/>
            <person name="Nakai K."/>
            <person name="Yada T."/>
            <person name="Nakamura Y."/>
            <person name="Ohara O."/>
            <person name="Isogai T."/>
            <person name="Sugano S."/>
        </authorList>
    </citation>
    <scope>NUCLEOTIDE SEQUENCE [LARGE SCALE MRNA] (ISOFORM 2)</scope>
    <source>
        <tissue>Uterus</tissue>
    </source>
</reference>
<reference key="6">
    <citation type="journal article" date="2004" name="Nature">
        <title>The DNA sequence and biology of human chromosome 19.</title>
        <authorList>
            <person name="Grimwood J."/>
            <person name="Gordon L.A."/>
            <person name="Olsen A.S."/>
            <person name="Terry A."/>
            <person name="Schmutz J."/>
            <person name="Lamerdin J.E."/>
            <person name="Hellsten U."/>
            <person name="Goodstein D."/>
            <person name="Couronne O."/>
            <person name="Tran-Gyamfi M."/>
            <person name="Aerts A."/>
            <person name="Altherr M."/>
            <person name="Ashworth L."/>
            <person name="Bajorek E."/>
            <person name="Black S."/>
            <person name="Branscomb E."/>
            <person name="Caenepeel S."/>
            <person name="Carrano A.V."/>
            <person name="Caoile C."/>
            <person name="Chan Y.M."/>
            <person name="Christensen M."/>
            <person name="Cleland C.A."/>
            <person name="Copeland A."/>
            <person name="Dalin E."/>
            <person name="Dehal P."/>
            <person name="Denys M."/>
            <person name="Detter J.C."/>
            <person name="Escobar J."/>
            <person name="Flowers D."/>
            <person name="Fotopulos D."/>
            <person name="Garcia C."/>
            <person name="Georgescu A.M."/>
            <person name="Glavina T."/>
            <person name="Gomez M."/>
            <person name="Gonzales E."/>
            <person name="Groza M."/>
            <person name="Hammon N."/>
            <person name="Hawkins T."/>
            <person name="Haydu L."/>
            <person name="Ho I."/>
            <person name="Huang W."/>
            <person name="Israni S."/>
            <person name="Jett J."/>
            <person name="Kadner K."/>
            <person name="Kimball H."/>
            <person name="Kobayashi A."/>
            <person name="Larionov V."/>
            <person name="Leem S.-H."/>
            <person name="Lopez F."/>
            <person name="Lou Y."/>
            <person name="Lowry S."/>
            <person name="Malfatti S."/>
            <person name="Martinez D."/>
            <person name="McCready P.M."/>
            <person name="Medina C."/>
            <person name="Morgan J."/>
            <person name="Nelson K."/>
            <person name="Nolan M."/>
            <person name="Ovcharenko I."/>
            <person name="Pitluck S."/>
            <person name="Pollard M."/>
            <person name="Popkie A.P."/>
            <person name="Predki P."/>
            <person name="Quan G."/>
            <person name="Ramirez L."/>
            <person name="Rash S."/>
            <person name="Retterer J."/>
            <person name="Rodriguez A."/>
            <person name="Rogers S."/>
            <person name="Salamov A."/>
            <person name="Salazar A."/>
            <person name="She X."/>
            <person name="Smith D."/>
            <person name="Slezak T."/>
            <person name="Solovyev V."/>
            <person name="Thayer N."/>
            <person name="Tice H."/>
            <person name="Tsai M."/>
            <person name="Ustaszewska A."/>
            <person name="Vo N."/>
            <person name="Wagner M."/>
            <person name="Wheeler J."/>
            <person name="Wu K."/>
            <person name="Xie G."/>
            <person name="Yang J."/>
            <person name="Dubchak I."/>
            <person name="Furey T.S."/>
            <person name="DeJong P."/>
            <person name="Dickson M."/>
            <person name="Gordon D."/>
            <person name="Eichler E.E."/>
            <person name="Pennacchio L.A."/>
            <person name="Richardson P."/>
            <person name="Stubbs L."/>
            <person name="Rokhsar D.S."/>
            <person name="Myers R.M."/>
            <person name="Rubin E.M."/>
            <person name="Lucas S.M."/>
        </authorList>
    </citation>
    <scope>NUCLEOTIDE SEQUENCE [LARGE SCALE GENOMIC DNA]</scope>
</reference>
<reference key="7">
    <citation type="journal article" date="2004" name="Genome Res.">
        <title>The status, quality, and expansion of the NIH full-length cDNA project: the Mammalian Gene Collection (MGC).</title>
        <authorList>
            <consortium name="The MGC Project Team"/>
        </authorList>
    </citation>
    <scope>NUCLEOTIDE SEQUENCE [LARGE SCALE MRNA] (ISOFORM 1)</scope>
    <source>
        <tissue>Leukocyte</tissue>
        <tissue>Lung</tissue>
    </source>
</reference>
<reference key="8">
    <citation type="journal article" date="2003" name="Nat. Biotechnol.">
        <title>Exploring proteomes and analyzing protein processing by mass spectrometric identification of sorted N-terminal peptides.</title>
        <authorList>
            <person name="Gevaert K."/>
            <person name="Goethals M."/>
            <person name="Martens L."/>
            <person name="Van Damme J."/>
            <person name="Staes A."/>
            <person name="Thomas G.R."/>
            <person name="Vandekerckhove J."/>
        </authorList>
    </citation>
    <scope>PROTEIN SEQUENCE OF 2-12</scope>
    <source>
        <tissue>Platelet</tissue>
    </source>
</reference>
<reference key="9">
    <citation type="submission" date="2004-10" db="UniProtKB">
        <authorList>
            <person name="Bienvenut W.V."/>
        </authorList>
    </citation>
    <scope>PROTEIN SEQUENCE OF 2-12 AND 326-334</scope>
    <scope>ACETYLATION AT ALA-2</scope>
    <scope>IDENTIFICATION BY MASS SPECTROMETRY</scope>
    <source>
        <tissue>B-cell lymphoma</tissue>
    </source>
</reference>
<reference key="10">
    <citation type="journal article" date="2008" name="Mol. Cell">
        <title>Kinase-selective enrichment enables quantitative phosphoproteomics of the kinome across the cell cycle.</title>
        <authorList>
            <person name="Daub H."/>
            <person name="Olsen J.V."/>
            <person name="Bairlein M."/>
            <person name="Gnad F."/>
            <person name="Oppermann F.S."/>
            <person name="Korner R."/>
            <person name="Greff Z."/>
            <person name="Keri G."/>
            <person name="Stemmann O."/>
            <person name="Mann M."/>
        </authorList>
    </citation>
    <scope>PHOSPHORYLATION [LARGE SCALE ANALYSIS] AT SER-193</scope>
    <scope>IDENTIFICATION BY MASS SPECTROMETRY [LARGE SCALE ANALYSIS]</scope>
    <source>
        <tissue>Cervix carcinoma</tissue>
    </source>
</reference>
<reference key="11">
    <citation type="journal article" date="2009" name="Anal. Chem.">
        <title>Lys-N and trypsin cover complementary parts of the phosphoproteome in a refined SCX-based approach.</title>
        <authorList>
            <person name="Gauci S."/>
            <person name="Helbig A.O."/>
            <person name="Slijper M."/>
            <person name="Krijgsveld J."/>
            <person name="Heck A.J."/>
            <person name="Mohammed S."/>
        </authorList>
    </citation>
    <scope>ACETYLATION [LARGE SCALE ANALYSIS] AT ALA-2</scope>
    <scope>CLEAVAGE OF INITIATOR METHIONINE [LARGE SCALE ANALYSIS]</scope>
    <scope>IDENTIFICATION BY MASS SPECTROMETRY [LARGE SCALE ANALYSIS]</scope>
</reference>
<reference key="12">
    <citation type="journal article" date="2009" name="Science">
        <title>Lysine acetylation targets protein complexes and co-regulates major cellular functions.</title>
        <authorList>
            <person name="Choudhary C."/>
            <person name="Kumar C."/>
            <person name="Gnad F."/>
            <person name="Nielsen M.L."/>
            <person name="Rehman M."/>
            <person name="Walther T.C."/>
            <person name="Olsen J.V."/>
            <person name="Mann M."/>
        </authorList>
    </citation>
    <scope>ACETYLATION [LARGE SCALE ANALYSIS] AT LYS-311</scope>
    <scope>IDENTIFICATION BY MASS SPECTROMETRY [LARGE SCALE ANALYSIS]</scope>
</reference>
<reference key="13">
    <citation type="journal article" date="2011" name="BMC Syst. Biol.">
        <title>Initial characterization of the human central proteome.</title>
        <authorList>
            <person name="Burkard T.R."/>
            <person name="Planyavsky M."/>
            <person name="Kaupe I."/>
            <person name="Breitwieser F.P."/>
            <person name="Buerckstuemmer T."/>
            <person name="Bennett K.L."/>
            <person name="Superti-Furga G."/>
            <person name="Colinge J."/>
        </authorList>
    </citation>
    <scope>IDENTIFICATION BY MASS SPECTROMETRY [LARGE SCALE ANALYSIS]</scope>
</reference>
<reference key="14">
    <citation type="journal article" date="2012" name="Mol. Cell. Proteomics">
        <title>Comparative large-scale characterisation of plant vs. mammal proteins reveals similar and idiosyncratic N-alpha acetylation features.</title>
        <authorList>
            <person name="Bienvenut W.V."/>
            <person name="Sumpton D."/>
            <person name="Martinez A."/>
            <person name="Lilla S."/>
            <person name="Espagne C."/>
            <person name="Meinnel T."/>
            <person name="Giglione C."/>
        </authorList>
    </citation>
    <scope>ACETYLATION [LARGE SCALE ANALYSIS] AT ALA-2</scope>
    <scope>CLEAVAGE OF INITIATOR METHIONINE [LARGE SCALE ANALYSIS]</scope>
    <scope>IDENTIFICATION BY MASS SPECTROMETRY [LARGE SCALE ANALYSIS]</scope>
</reference>
<reference key="15">
    <citation type="journal article" date="2012" name="Proc. Natl. Acad. Sci. U.S.A.">
        <title>N-terminal acetylome analyses and functional insights of the N-terminal acetyltransferase NatB.</title>
        <authorList>
            <person name="Van Damme P."/>
            <person name="Lasa M."/>
            <person name="Polevoda B."/>
            <person name="Gazquez C."/>
            <person name="Elosegui-Artola A."/>
            <person name="Kim D.S."/>
            <person name="De Juan-Pardo E."/>
            <person name="Demeyer K."/>
            <person name="Hole K."/>
            <person name="Larrea E."/>
            <person name="Timmerman E."/>
            <person name="Prieto J."/>
            <person name="Arnesen T."/>
            <person name="Sherman F."/>
            <person name="Gevaert K."/>
            <person name="Aldabe R."/>
        </authorList>
    </citation>
    <scope>ACETYLATION [LARGE SCALE ANALYSIS] AT ALA-2</scope>
    <scope>CLEAVAGE OF INITIATOR METHIONINE [LARGE SCALE ANALYSIS]</scope>
    <scope>IDENTIFICATION BY MASS SPECTROMETRY [LARGE SCALE ANALYSIS]</scope>
</reference>
<reference key="16">
    <citation type="journal article" date="2013" name="J. Proteome Res.">
        <title>Toward a comprehensive characterization of a human cancer cell phosphoproteome.</title>
        <authorList>
            <person name="Zhou H."/>
            <person name="Di Palma S."/>
            <person name="Preisinger C."/>
            <person name="Peng M."/>
            <person name="Polat A.N."/>
            <person name="Heck A.J."/>
            <person name="Mohammed S."/>
        </authorList>
    </citation>
    <scope>PHOSPHORYLATION [LARGE SCALE ANALYSIS] AT THR-190</scope>
    <scope>IDENTIFICATION BY MASS SPECTROMETRY [LARGE SCALE ANALYSIS]</scope>
    <source>
        <tissue>Erythroleukemia</tissue>
    </source>
</reference>
<reference key="17">
    <citation type="journal article" date="2015" name="Proteomics">
        <title>N-terminome analysis of the human mitochondrial proteome.</title>
        <authorList>
            <person name="Vaca Jacome A.S."/>
            <person name="Rabilloud T."/>
            <person name="Schaeffer-Reiss C."/>
            <person name="Rompais M."/>
            <person name="Ayoub D."/>
            <person name="Lane L."/>
            <person name="Bairoch A."/>
            <person name="Van Dorsselaer A."/>
            <person name="Carapito C."/>
        </authorList>
    </citation>
    <scope>ACETYLATION [LARGE SCALE ANALYSIS] AT ALA-2</scope>
    <scope>CLEAVAGE OF INITIATOR METHIONINE [LARGE SCALE ANALYSIS]</scope>
    <scope>IDENTIFICATION BY MASS SPECTROMETRY [LARGE SCALE ANALYSIS]</scope>
</reference>
<reference key="18">
    <citation type="journal article" date="2019" name="Clin. Genet.">
        <title>FARSA mutations mimic phenylalanyl-tRNA synthetase deficiency caused by FARSB defects.</title>
        <authorList>
            <person name="Krenke K."/>
            <person name="Szczaluba K."/>
            <person name="Bielecka T."/>
            <person name="Rydzanicz M."/>
            <person name="Lange J."/>
            <person name="Koppolu A."/>
            <person name="Ploski R."/>
        </authorList>
    </citation>
    <scope>INVOLVEMENT IN RILDBC2</scope>
    <scope>VARIANTS RILDBC2 LEU-256 AND LYS-410</scope>
</reference>
<reference evidence="11" key="19">
    <citation type="journal article" date="2010" name="Structure">
        <title>Structure of human cytosolic phenylalanyl-tRNA synthetase: evidence for kingdom-specific design of the active sites and tRNA binding patterns.</title>
        <authorList>
            <person name="Finarov I."/>
            <person name="Moor N."/>
            <person name="Kessler N."/>
            <person name="Klipcan L."/>
            <person name="Safro M.G."/>
        </authorList>
    </citation>
    <scope>X-RAY CRYSTALLOGRAPHY (3.30 ANGSTROMS) IN COMPLEX WITH L-PHENYLALANINE</scope>
    <scope>CATALYTIC ACTIVITY</scope>
    <scope>SUBUNIT</scope>
</reference>
<organism>
    <name type="scientific">Homo sapiens</name>
    <name type="common">Human</name>
    <dbReference type="NCBI Taxonomy" id="9606"/>
    <lineage>
        <taxon>Eukaryota</taxon>
        <taxon>Metazoa</taxon>
        <taxon>Chordata</taxon>
        <taxon>Craniata</taxon>
        <taxon>Vertebrata</taxon>
        <taxon>Euteleostomi</taxon>
        <taxon>Mammalia</taxon>
        <taxon>Eutheria</taxon>
        <taxon>Euarchontoglires</taxon>
        <taxon>Primates</taxon>
        <taxon>Haplorrhini</taxon>
        <taxon>Catarrhini</taxon>
        <taxon>Hominidae</taxon>
        <taxon>Homo</taxon>
    </lineage>
</organism>
<accession>Q9Y285</accession>
<accession>B4E363</accession>
<accession>Q9NSD8</accession>
<accession>Q9Y4W8</accession>
<proteinExistence type="evidence at protein level"/>
<evidence type="ECO:0000250" key="1">
    <source>
        <dbReference type="UniProtKB" id="A5K9S0"/>
    </source>
</evidence>
<evidence type="ECO:0000250" key="2">
    <source>
        <dbReference type="UniProtKB" id="Q505J8"/>
    </source>
</evidence>
<evidence type="ECO:0000250" key="3">
    <source>
        <dbReference type="UniProtKB" id="Q8C0C7"/>
    </source>
</evidence>
<evidence type="ECO:0000269" key="4">
    <source>
    </source>
</evidence>
<evidence type="ECO:0000269" key="5">
    <source>
    </source>
</evidence>
<evidence type="ECO:0000269" key="6">
    <source>
    </source>
</evidence>
<evidence type="ECO:0000269" key="7">
    <source ref="9"/>
</evidence>
<evidence type="ECO:0000303" key="8">
    <source>
    </source>
</evidence>
<evidence type="ECO:0000305" key="9"/>
<evidence type="ECO:0000305" key="10">
    <source>
    </source>
</evidence>
<evidence type="ECO:0007744" key="11">
    <source>
        <dbReference type="PDB" id="3L4G"/>
    </source>
</evidence>
<evidence type="ECO:0007744" key="12">
    <source>
    </source>
</evidence>
<evidence type="ECO:0007744" key="13">
    <source>
    </source>
</evidence>
<evidence type="ECO:0007744" key="14">
    <source>
    </source>
</evidence>
<evidence type="ECO:0007744" key="15">
    <source>
    </source>
</evidence>
<evidence type="ECO:0007744" key="16">
    <source>
    </source>
</evidence>
<evidence type="ECO:0007744" key="17">
    <source>
    </source>
</evidence>
<evidence type="ECO:0007744" key="18">
    <source>
    </source>
</evidence>
<evidence type="ECO:0007829" key="19">
    <source>
        <dbReference type="PDB" id="3L4G"/>
    </source>
</evidence>
<gene>
    <name type="primary">FARSA</name>
    <name type="synonym">FARS</name>
    <name type="synonym">FARSL</name>
    <name type="synonym">FARSLA</name>
</gene>
<protein>
    <recommendedName>
        <fullName>Phenylalanine--tRNA ligase alpha subunit</fullName>
        <ecNumber evidence="5">6.1.1.20</ecNumber>
    </recommendedName>
    <alternativeName>
        <fullName>CML33</fullName>
    </alternativeName>
    <alternativeName>
        <fullName>Phenylalanyl-tRNA synthetase alpha subunit</fullName>
        <shortName>PheRS</shortName>
    </alternativeName>
</protein>
<keyword id="KW-0002">3D-structure</keyword>
<keyword id="KW-0007">Acetylation</keyword>
<keyword id="KW-0025">Alternative splicing</keyword>
<keyword id="KW-0030">Aminoacyl-tRNA synthetase</keyword>
<keyword id="KW-0067">ATP-binding</keyword>
<keyword id="KW-0963">Cytoplasm</keyword>
<keyword id="KW-0903">Direct protein sequencing</keyword>
<keyword id="KW-0225">Disease variant</keyword>
<keyword id="KW-0436">Ligase</keyword>
<keyword id="KW-0460">Magnesium</keyword>
<keyword id="KW-0479">Metal-binding</keyword>
<keyword id="KW-0547">Nucleotide-binding</keyword>
<keyword id="KW-0597">Phosphoprotein</keyword>
<keyword id="KW-0648">Protein biosynthesis</keyword>
<keyword id="KW-1267">Proteomics identification</keyword>
<keyword id="KW-1185">Reference proteome</keyword>
<name>SYFA_HUMAN</name>
<sequence length="508" mass="57564">MADGQVAELLLRRLEASDGGLDSAELAAELGMEHQAVVGAVKSLQALGEVIEAELRSTKHWELTAEGEEIAREGSHEARVFRSIPPEGLAQSELMRLPSGKVGFSKAMSNKWIRVDKSAADGPRVFRVVDSMEDEVQRRLQLVRGGQAEKLGEKERSELRKRKLLAEVTLKTYWVSKGSAFSTSISKQETELSPEMISSGSWRDRPFKPYNFLAHGVLPDSGHLHPLLKVRSQFRQIFLEMGFTEMPTDNFIESSFWNFDALFQPQQHPARDQHDTFFLRDPAEALQLPMDYVQRVKRTHSQGGYGSQGYKYNWKLDEARKNLLRTHTTSASARALYRLAQKKPFTPVKYFSIDRVFRNETLDATHLAEFHQIEGVVADHGLTLGHLMGVLREFFTKLGITQLRFKPAYNPYTEPSMEVFSYHQGLKKWVEVGNSGVFRPEMLLPMGLPENVSVIAWGLSLERPTMIKYGINNIRELVGHKVNLQMVYDSPLCRLDAEPRPPPTQEAA</sequence>
<dbReference type="EC" id="6.1.1.20" evidence="5"/>
<dbReference type="EMBL" id="U07424">
    <property type="protein sequence ID" value="AAB61694.1"/>
    <property type="molecule type" value="mRNA"/>
</dbReference>
<dbReference type="EMBL" id="AF042347">
    <property type="protein sequence ID" value="AAD02221.1"/>
    <property type="molecule type" value="mRNA"/>
</dbReference>
<dbReference type="EMBL" id="D84471">
    <property type="protein sequence ID" value="BAA95666.1"/>
    <property type="molecule type" value="mRNA"/>
</dbReference>
<dbReference type="EMBL" id="BT007198">
    <property type="protein sequence ID" value="AAP35862.1"/>
    <property type="molecule type" value="mRNA"/>
</dbReference>
<dbReference type="EMBL" id="AK304587">
    <property type="protein sequence ID" value="BAG65375.1"/>
    <property type="molecule type" value="mRNA"/>
</dbReference>
<dbReference type="EMBL" id="AD000092">
    <property type="protein sequence ID" value="AAB51175.1"/>
    <property type="status" value="ALT_SEQ"/>
    <property type="molecule type" value="Genomic_DNA"/>
</dbReference>
<dbReference type="EMBL" id="BC006495">
    <property type="protein sequence ID" value="AAH06495.1"/>
    <property type="molecule type" value="mRNA"/>
</dbReference>
<dbReference type="EMBL" id="BC043565">
    <property type="protein sequence ID" value="AAH43565.1"/>
    <property type="molecule type" value="mRNA"/>
</dbReference>
<dbReference type="CCDS" id="CCDS12287.1">
    <molecule id="Q9Y285-1"/>
</dbReference>
<dbReference type="PIR" id="T45074">
    <property type="entry name" value="T45074"/>
</dbReference>
<dbReference type="RefSeq" id="NP_004452.1">
    <molecule id="Q9Y285-1"/>
    <property type="nucleotide sequence ID" value="NM_004461.3"/>
</dbReference>
<dbReference type="PDB" id="3L4G">
    <property type="method" value="X-ray"/>
    <property type="resolution" value="3.30 A"/>
    <property type="chains" value="A/C/E/G/I/K/M/O=1-508"/>
</dbReference>
<dbReference type="PDBsum" id="3L4G"/>
<dbReference type="SMR" id="Q9Y285"/>
<dbReference type="BioGRID" id="108487">
    <property type="interactions" value="180"/>
</dbReference>
<dbReference type="ComplexPortal" id="CPX-2208">
    <property type="entry name" value="Phenylalanyl-tRNA synthetase complex"/>
</dbReference>
<dbReference type="DIP" id="DIP-53610N"/>
<dbReference type="FunCoup" id="Q9Y285">
    <property type="interactions" value="2438"/>
</dbReference>
<dbReference type="IntAct" id="Q9Y285">
    <property type="interactions" value="70"/>
</dbReference>
<dbReference type="MINT" id="Q9Y285"/>
<dbReference type="STRING" id="9606.ENSP00000320309"/>
<dbReference type="DrugBank" id="DB00120">
    <property type="generic name" value="Phenylalanine"/>
</dbReference>
<dbReference type="GlyGen" id="Q9Y285">
    <property type="glycosylation" value="1 site, 1 O-linked glycan (1 site)"/>
</dbReference>
<dbReference type="iPTMnet" id="Q9Y285"/>
<dbReference type="MetOSite" id="Q9Y285"/>
<dbReference type="PhosphoSitePlus" id="Q9Y285"/>
<dbReference type="SwissPalm" id="Q9Y285"/>
<dbReference type="BioMuta" id="FARSA"/>
<dbReference type="DMDM" id="12643946"/>
<dbReference type="jPOST" id="Q9Y285"/>
<dbReference type="MassIVE" id="Q9Y285"/>
<dbReference type="PaxDb" id="9606-ENSP00000320309"/>
<dbReference type="PeptideAtlas" id="Q9Y285"/>
<dbReference type="ProteomicsDB" id="5881"/>
<dbReference type="ProteomicsDB" id="85694">
    <molecule id="Q9Y285-1"/>
</dbReference>
<dbReference type="Pumba" id="Q9Y285"/>
<dbReference type="Antibodypedia" id="1072">
    <property type="antibodies" value="139 antibodies from 25 providers"/>
</dbReference>
<dbReference type="DNASU" id="2193"/>
<dbReference type="Ensembl" id="ENST00000314606.9">
    <molecule id="Q9Y285-1"/>
    <property type="protein sequence ID" value="ENSP00000320309.3"/>
    <property type="gene ID" value="ENSG00000179115.11"/>
</dbReference>
<dbReference type="Ensembl" id="ENST00000423140.6">
    <molecule id="Q9Y285-2"/>
    <property type="protein sequence ID" value="ENSP00000396548.2"/>
    <property type="gene ID" value="ENSG00000179115.11"/>
</dbReference>
<dbReference type="GeneID" id="2193"/>
<dbReference type="KEGG" id="hsa:2193"/>
<dbReference type="MANE-Select" id="ENST00000314606.9">
    <property type="protein sequence ID" value="ENSP00000320309.3"/>
    <property type="RefSeq nucleotide sequence ID" value="NM_004461.3"/>
    <property type="RefSeq protein sequence ID" value="NP_004452.1"/>
</dbReference>
<dbReference type="UCSC" id="uc002mvs.3">
    <molecule id="Q9Y285-1"/>
    <property type="organism name" value="human"/>
</dbReference>
<dbReference type="AGR" id="HGNC:3592"/>
<dbReference type="CTD" id="2193"/>
<dbReference type="DisGeNET" id="2193"/>
<dbReference type="GeneCards" id="FARSA"/>
<dbReference type="HGNC" id="HGNC:3592">
    <property type="gene designation" value="FARSA"/>
</dbReference>
<dbReference type="HPA" id="ENSG00000179115">
    <property type="expression patterns" value="Low tissue specificity"/>
</dbReference>
<dbReference type="MalaCards" id="FARSA"/>
<dbReference type="MIM" id="602918">
    <property type="type" value="gene"/>
</dbReference>
<dbReference type="MIM" id="619013">
    <property type="type" value="phenotype"/>
</dbReference>
<dbReference type="neXtProt" id="NX_Q9Y285"/>
<dbReference type="OpenTargets" id="ENSG00000179115"/>
<dbReference type="PharmGKB" id="PA28005"/>
<dbReference type="VEuPathDB" id="HostDB:ENSG00000179115"/>
<dbReference type="eggNOG" id="KOG2784">
    <property type="taxonomic scope" value="Eukaryota"/>
</dbReference>
<dbReference type="GeneTree" id="ENSGT00390000006387"/>
<dbReference type="HOGENOM" id="CLU_025086_2_2_1"/>
<dbReference type="InParanoid" id="Q9Y285"/>
<dbReference type="OMA" id="QIEGWVM"/>
<dbReference type="OrthoDB" id="238316at2759"/>
<dbReference type="PAN-GO" id="Q9Y285">
    <property type="GO annotations" value="4 GO annotations based on evolutionary models"/>
</dbReference>
<dbReference type="PhylomeDB" id="Q9Y285"/>
<dbReference type="TreeFam" id="TF300647"/>
<dbReference type="BRENDA" id="6.1.1.20">
    <property type="organism ID" value="2681"/>
</dbReference>
<dbReference type="PathwayCommons" id="Q9Y285"/>
<dbReference type="Reactome" id="R-HSA-379716">
    <property type="pathway name" value="Cytosolic tRNA aminoacylation"/>
</dbReference>
<dbReference type="SignaLink" id="Q9Y285"/>
<dbReference type="SIGNOR" id="Q9Y285"/>
<dbReference type="BioGRID-ORCS" id="2193">
    <property type="hits" value="818 hits in 1167 CRISPR screens"/>
</dbReference>
<dbReference type="CD-CODE" id="FB4E32DD">
    <property type="entry name" value="Presynaptic clusters and postsynaptic densities"/>
</dbReference>
<dbReference type="ChiTaRS" id="FARSA">
    <property type="organism name" value="human"/>
</dbReference>
<dbReference type="EvolutionaryTrace" id="Q9Y285"/>
<dbReference type="GeneWiki" id="FARSA_(gene)"/>
<dbReference type="GenomeRNAi" id="2193"/>
<dbReference type="Pharos" id="Q9Y285">
    <property type="development level" value="Tbio"/>
</dbReference>
<dbReference type="PRO" id="PR:Q9Y285"/>
<dbReference type="Proteomes" id="UP000005640">
    <property type="component" value="Chromosome 19"/>
</dbReference>
<dbReference type="RNAct" id="Q9Y285">
    <property type="molecule type" value="protein"/>
</dbReference>
<dbReference type="Bgee" id="ENSG00000179115">
    <property type="expression patterns" value="Expressed in prefrontal cortex and 194 other cell types or tissues"/>
</dbReference>
<dbReference type="ExpressionAtlas" id="Q9Y285">
    <property type="expression patterns" value="baseline and differential"/>
</dbReference>
<dbReference type="GO" id="GO:0005737">
    <property type="term" value="C:cytoplasm"/>
    <property type="evidence" value="ECO:0000318"/>
    <property type="project" value="GO_Central"/>
</dbReference>
<dbReference type="GO" id="GO:0005829">
    <property type="term" value="C:cytosol"/>
    <property type="evidence" value="ECO:0000304"/>
    <property type="project" value="Reactome"/>
</dbReference>
<dbReference type="GO" id="GO:0016020">
    <property type="term" value="C:membrane"/>
    <property type="evidence" value="ECO:0007005"/>
    <property type="project" value="UniProtKB"/>
</dbReference>
<dbReference type="GO" id="GO:0009328">
    <property type="term" value="C:phenylalanine-tRNA ligase complex"/>
    <property type="evidence" value="ECO:0000314"/>
    <property type="project" value="UniProtKB"/>
</dbReference>
<dbReference type="GO" id="GO:0005524">
    <property type="term" value="F:ATP binding"/>
    <property type="evidence" value="ECO:0007669"/>
    <property type="project" value="UniProtKB-KW"/>
</dbReference>
<dbReference type="GO" id="GO:0000287">
    <property type="term" value="F:magnesium ion binding"/>
    <property type="evidence" value="ECO:0000250"/>
    <property type="project" value="UniProtKB"/>
</dbReference>
<dbReference type="GO" id="GO:0004826">
    <property type="term" value="F:phenylalanine-tRNA ligase activity"/>
    <property type="evidence" value="ECO:0000314"/>
    <property type="project" value="UniProtKB"/>
</dbReference>
<dbReference type="GO" id="GO:0003723">
    <property type="term" value="F:RNA binding"/>
    <property type="evidence" value="ECO:0007005"/>
    <property type="project" value="UniProtKB"/>
</dbReference>
<dbReference type="GO" id="GO:0000049">
    <property type="term" value="F:tRNA binding"/>
    <property type="evidence" value="ECO:0007669"/>
    <property type="project" value="InterPro"/>
</dbReference>
<dbReference type="GO" id="GO:0006432">
    <property type="term" value="P:phenylalanyl-tRNA aminoacylation"/>
    <property type="evidence" value="ECO:0000314"/>
    <property type="project" value="UniProtKB"/>
</dbReference>
<dbReference type="GO" id="GO:0051290">
    <property type="term" value="P:protein heterotetramerization"/>
    <property type="evidence" value="ECO:0000314"/>
    <property type="project" value="UniProtKB"/>
</dbReference>
<dbReference type="CDD" id="cd00496">
    <property type="entry name" value="PheRS_alpha_core"/>
    <property type="match status" value="1"/>
</dbReference>
<dbReference type="FunFam" id="1.10.10.2320:FF:000001">
    <property type="entry name" value="phenylalanine--tRNA ligase alpha subunit"/>
    <property type="match status" value="1"/>
</dbReference>
<dbReference type="FunFam" id="1.10.10.2330:FF:000001">
    <property type="entry name" value="phenylalanine--tRNA ligase alpha subunit"/>
    <property type="match status" value="1"/>
</dbReference>
<dbReference type="FunFam" id="3.30.1370.240:FF:000002">
    <property type="entry name" value="phenylalanine--tRNA ligase alpha subunit"/>
    <property type="match status" value="1"/>
</dbReference>
<dbReference type="FunFam" id="3.30.930.10:FF:000036">
    <property type="entry name" value="phenylalanine--tRNA ligase alpha subunit"/>
    <property type="match status" value="1"/>
</dbReference>
<dbReference type="Gene3D" id="1.10.10.2320">
    <property type="match status" value="1"/>
</dbReference>
<dbReference type="Gene3D" id="1.10.10.2330">
    <property type="match status" value="1"/>
</dbReference>
<dbReference type="Gene3D" id="3.30.1370.240">
    <property type="match status" value="1"/>
</dbReference>
<dbReference type="Gene3D" id="3.30.930.10">
    <property type="entry name" value="Bira Bifunctional Protein, Domain 2"/>
    <property type="match status" value="1"/>
</dbReference>
<dbReference type="InterPro" id="IPR006195">
    <property type="entry name" value="aa-tRNA-synth_II"/>
</dbReference>
<dbReference type="InterPro" id="IPR045864">
    <property type="entry name" value="aa-tRNA-synth_II/BPL/LPL"/>
</dbReference>
<dbReference type="InterPro" id="IPR004529">
    <property type="entry name" value="Phe-tRNA-synth_IIc_asu"/>
</dbReference>
<dbReference type="InterPro" id="IPR002319">
    <property type="entry name" value="Phenylalanyl-tRNA_Synthase"/>
</dbReference>
<dbReference type="InterPro" id="IPR040724">
    <property type="entry name" value="PheRS_DBD1"/>
</dbReference>
<dbReference type="InterPro" id="IPR040586">
    <property type="entry name" value="PheRS_DBD2"/>
</dbReference>
<dbReference type="InterPro" id="IPR040725">
    <property type="entry name" value="PheRS_DBD3"/>
</dbReference>
<dbReference type="InterPro" id="IPR036390">
    <property type="entry name" value="WH_DNA-bd_sf"/>
</dbReference>
<dbReference type="NCBIfam" id="TIGR00468">
    <property type="entry name" value="pheS"/>
    <property type="match status" value="1"/>
</dbReference>
<dbReference type="NCBIfam" id="NF003210">
    <property type="entry name" value="PRK04172.1"/>
    <property type="match status" value="1"/>
</dbReference>
<dbReference type="PANTHER" id="PTHR11538:SF40">
    <property type="entry name" value="PHENYLALANINE--TRNA LIGASE ALPHA SUBUNIT"/>
    <property type="match status" value="1"/>
</dbReference>
<dbReference type="PANTHER" id="PTHR11538">
    <property type="entry name" value="PHENYLALANYL-TRNA SYNTHETASE"/>
    <property type="match status" value="1"/>
</dbReference>
<dbReference type="Pfam" id="PF18552">
    <property type="entry name" value="PheRS_DBD1"/>
    <property type="match status" value="1"/>
</dbReference>
<dbReference type="Pfam" id="PF18554">
    <property type="entry name" value="PheRS_DBD2"/>
    <property type="match status" value="1"/>
</dbReference>
<dbReference type="Pfam" id="PF18553">
    <property type="entry name" value="PheRS_DBD3"/>
    <property type="match status" value="1"/>
</dbReference>
<dbReference type="Pfam" id="PF01409">
    <property type="entry name" value="tRNA-synt_2d"/>
    <property type="match status" value="1"/>
</dbReference>
<dbReference type="SUPFAM" id="SSF55681">
    <property type="entry name" value="Class II aaRS and biotin synthetases"/>
    <property type="match status" value="1"/>
</dbReference>
<dbReference type="SUPFAM" id="SSF46785">
    <property type="entry name" value="Winged helix' DNA-binding domain"/>
    <property type="match status" value="1"/>
</dbReference>
<dbReference type="PROSITE" id="PS50862">
    <property type="entry name" value="AA_TRNA_LIGASE_II"/>
    <property type="match status" value="1"/>
</dbReference>